<keyword id="KW-0963">Cytoplasm</keyword>
<keyword id="KW-0489">Methyltransferase</keyword>
<keyword id="KW-1185">Reference proteome</keyword>
<keyword id="KW-0698">rRNA processing</keyword>
<keyword id="KW-0949">S-adenosyl-L-methionine</keyword>
<keyword id="KW-0808">Transferase</keyword>
<organism>
    <name type="scientific">Campylobacter lari (strain RM2100 / D67 / ATCC BAA-1060)</name>
    <dbReference type="NCBI Taxonomy" id="306263"/>
    <lineage>
        <taxon>Bacteria</taxon>
        <taxon>Pseudomonadati</taxon>
        <taxon>Campylobacterota</taxon>
        <taxon>Epsilonproteobacteria</taxon>
        <taxon>Campylobacterales</taxon>
        <taxon>Campylobacteraceae</taxon>
        <taxon>Campylobacter</taxon>
    </lineage>
</organism>
<dbReference type="EC" id="2.1.1.199" evidence="1"/>
<dbReference type="EMBL" id="CP000932">
    <property type="protein sequence ID" value="ACM64497.1"/>
    <property type="molecule type" value="Genomic_DNA"/>
</dbReference>
<dbReference type="RefSeq" id="WP_012661880.1">
    <property type="nucleotide sequence ID" value="NC_012039.1"/>
</dbReference>
<dbReference type="SMR" id="B9KD58"/>
<dbReference type="STRING" id="306263.Cla_1175"/>
<dbReference type="KEGG" id="cla:CLA_1175"/>
<dbReference type="PATRIC" id="fig|306263.5.peg.1164"/>
<dbReference type="eggNOG" id="COG0275">
    <property type="taxonomic scope" value="Bacteria"/>
</dbReference>
<dbReference type="HOGENOM" id="CLU_038422_3_0_7"/>
<dbReference type="Proteomes" id="UP000007727">
    <property type="component" value="Chromosome"/>
</dbReference>
<dbReference type="GO" id="GO:0005737">
    <property type="term" value="C:cytoplasm"/>
    <property type="evidence" value="ECO:0007669"/>
    <property type="project" value="UniProtKB-SubCell"/>
</dbReference>
<dbReference type="GO" id="GO:0071424">
    <property type="term" value="F:rRNA (cytosine-N4-)-methyltransferase activity"/>
    <property type="evidence" value="ECO:0007669"/>
    <property type="project" value="UniProtKB-UniRule"/>
</dbReference>
<dbReference type="GO" id="GO:0070475">
    <property type="term" value="P:rRNA base methylation"/>
    <property type="evidence" value="ECO:0007669"/>
    <property type="project" value="UniProtKB-UniRule"/>
</dbReference>
<dbReference type="Gene3D" id="1.10.150.170">
    <property type="entry name" value="Putative methyltransferase TM0872, insert domain"/>
    <property type="match status" value="1"/>
</dbReference>
<dbReference type="Gene3D" id="3.40.50.150">
    <property type="entry name" value="Vaccinia Virus protein VP39"/>
    <property type="match status" value="1"/>
</dbReference>
<dbReference type="HAMAP" id="MF_01007">
    <property type="entry name" value="16SrRNA_methyltr_H"/>
    <property type="match status" value="1"/>
</dbReference>
<dbReference type="InterPro" id="IPR002903">
    <property type="entry name" value="RsmH"/>
</dbReference>
<dbReference type="InterPro" id="IPR023397">
    <property type="entry name" value="SAM-dep_MeTrfase_MraW_recog"/>
</dbReference>
<dbReference type="InterPro" id="IPR029063">
    <property type="entry name" value="SAM-dependent_MTases_sf"/>
</dbReference>
<dbReference type="NCBIfam" id="TIGR00006">
    <property type="entry name" value="16S rRNA (cytosine(1402)-N(4))-methyltransferase RsmH"/>
    <property type="match status" value="1"/>
</dbReference>
<dbReference type="PANTHER" id="PTHR11265:SF0">
    <property type="entry name" value="12S RRNA N4-METHYLCYTIDINE METHYLTRANSFERASE"/>
    <property type="match status" value="1"/>
</dbReference>
<dbReference type="PANTHER" id="PTHR11265">
    <property type="entry name" value="S-ADENOSYL-METHYLTRANSFERASE MRAW"/>
    <property type="match status" value="1"/>
</dbReference>
<dbReference type="Pfam" id="PF01795">
    <property type="entry name" value="Methyltransf_5"/>
    <property type="match status" value="1"/>
</dbReference>
<dbReference type="PIRSF" id="PIRSF004486">
    <property type="entry name" value="MraW"/>
    <property type="match status" value="1"/>
</dbReference>
<dbReference type="SUPFAM" id="SSF81799">
    <property type="entry name" value="Putative methyltransferase TM0872, insert domain"/>
    <property type="match status" value="1"/>
</dbReference>
<dbReference type="SUPFAM" id="SSF53335">
    <property type="entry name" value="S-adenosyl-L-methionine-dependent methyltransferases"/>
    <property type="match status" value="1"/>
</dbReference>
<accession>B9KD58</accession>
<sequence length="305" mass="34460">MQSPHIPVLLQEVLDAFDDFDSGDFLDCTLGYGGHSKALLQAHEKLRLIACDKDLEALNFSKEFLKKFQDRISFNHIGFKDILTQIPTQNLRGILADIGVSSLQLDKNDRGFSLNSDFLDMRMDQNNLLSAKEVVNSYSKEALEQIFKDYGDLAPVASMLTQKIINARSQKEITSAKELSQIIGNAKLKGRNVSLALLVFQALRIEVNNELGELKSLLENIEKAKLKDCKLAIISFHSLEDRIVKNTFKRWEKDCICDERAIKCECGKGHSLGKILSKKAISASKEEISYNSRSSCAKMRIFYFR</sequence>
<feature type="chain" id="PRO_0000386790" description="Ribosomal RNA small subunit methyltransferase H">
    <location>
        <begin position="1"/>
        <end position="305"/>
    </location>
</feature>
<feature type="binding site" evidence="1">
    <location>
        <begin position="33"/>
        <end position="35"/>
    </location>
    <ligand>
        <name>S-adenosyl-L-methionine</name>
        <dbReference type="ChEBI" id="CHEBI:59789"/>
    </ligand>
</feature>
<feature type="binding site" evidence="1">
    <location>
        <position position="52"/>
    </location>
    <ligand>
        <name>S-adenosyl-L-methionine</name>
        <dbReference type="ChEBI" id="CHEBI:59789"/>
    </ligand>
</feature>
<feature type="binding site" evidence="1">
    <location>
        <position position="97"/>
    </location>
    <ligand>
        <name>S-adenosyl-L-methionine</name>
        <dbReference type="ChEBI" id="CHEBI:59789"/>
    </ligand>
</feature>
<feature type="binding site" evidence="1">
    <location>
        <position position="104"/>
    </location>
    <ligand>
        <name>S-adenosyl-L-methionine</name>
        <dbReference type="ChEBI" id="CHEBI:59789"/>
    </ligand>
</feature>
<proteinExistence type="inferred from homology"/>
<comment type="function">
    <text evidence="1">Specifically methylates the N4 position of cytidine in position 1402 (C1402) of 16S rRNA.</text>
</comment>
<comment type="catalytic activity">
    <reaction evidence="1">
        <text>cytidine(1402) in 16S rRNA + S-adenosyl-L-methionine = N(4)-methylcytidine(1402) in 16S rRNA + S-adenosyl-L-homocysteine + H(+)</text>
        <dbReference type="Rhea" id="RHEA:42928"/>
        <dbReference type="Rhea" id="RHEA-COMP:10286"/>
        <dbReference type="Rhea" id="RHEA-COMP:10287"/>
        <dbReference type="ChEBI" id="CHEBI:15378"/>
        <dbReference type="ChEBI" id="CHEBI:57856"/>
        <dbReference type="ChEBI" id="CHEBI:59789"/>
        <dbReference type="ChEBI" id="CHEBI:74506"/>
        <dbReference type="ChEBI" id="CHEBI:82748"/>
        <dbReference type="EC" id="2.1.1.199"/>
    </reaction>
</comment>
<comment type="subcellular location">
    <subcellularLocation>
        <location evidence="1">Cytoplasm</location>
    </subcellularLocation>
</comment>
<comment type="similarity">
    <text evidence="1">Belongs to the methyltransferase superfamily. RsmH family.</text>
</comment>
<name>RSMH_CAMLR</name>
<reference key="1">
    <citation type="journal article" date="2008" name="Foodborne Pathog. Dis.">
        <title>The complete genome sequence and analysis of the human pathogen Campylobacter lari.</title>
        <authorList>
            <person name="Miller W.G."/>
            <person name="Wang G."/>
            <person name="Binnewies T.T."/>
            <person name="Parker C.T."/>
        </authorList>
    </citation>
    <scope>NUCLEOTIDE SEQUENCE [LARGE SCALE GENOMIC DNA]</scope>
    <source>
        <strain>RM2100 / D67 / ATCC BAA-1060</strain>
    </source>
</reference>
<protein>
    <recommendedName>
        <fullName evidence="1">Ribosomal RNA small subunit methyltransferase H</fullName>
        <ecNumber evidence="1">2.1.1.199</ecNumber>
    </recommendedName>
    <alternativeName>
        <fullName evidence="1">16S rRNA m(4)C1402 methyltransferase</fullName>
    </alternativeName>
    <alternativeName>
        <fullName evidence="1">rRNA (cytosine-N(4)-)-methyltransferase RsmH</fullName>
    </alternativeName>
</protein>
<evidence type="ECO:0000255" key="1">
    <source>
        <dbReference type="HAMAP-Rule" id="MF_01007"/>
    </source>
</evidence>
<gene>
    <name evidence="1" type="primary">rsmH</name>
    <name type="synonym">mraW</name>
    <name type="ordered locus">Cla_1175</name>
</gene>